<proteinExistence type="inferred from homology"/>
<feature type="chain" id="PRO_0000225270" description="DNA-directed RNA polymerase subunit alpha">
    <location>
        <begin position="1"/>
        <end position="330"/>
    </location>
</feature>
<feature type="region of interest" description="Alpha N-terminal domain (alpha-NTD)" evidence="1">
    <location>
        <begin position="1"/>
        <end position="225"/>
    </location>
</feature>
<feature type="region of interest" description="Alpha C-terminal domain (alpha-CTD)" evidence="1">
    <location>
        <begin position="237"/>
        <end position="330"/>
    </location>
</feature>
<keyword id="KW-0240">DNA-directed RNA polymerase</keyword>
<keyword id="KW-0548">Nucleotidyltransferase</keyword>
<keyword id="KW-0804">Transcription</keyword>
<keyword id="KW-0808">Transferase</keyword>
<comment type="function">
    <text evidence="1">DNA-dependent RNA polymerase catalyzes the transcription of DNA into RNA using the four ribonucleoside triphosphates as substrates.</text>
</comment>
<comment type="catalytic activity">
    <reaction evidence="1">
        <text>RNA(n) + a ribonucleoside 5'-triphosphate = RNA(n+1) + diphosphate</text>
        <dbReference type="Rhea" id="RHEA:21248"/>
        <dbReference type="Rhea" id="RHEA-COMP:14527"/>
        <dbReference type="Rhea" id="RHEA-COMP:17342"/>
        <dbReference type="ChEBI" id="CHEBI:33019"/>
        <dbReference type="ChEBI" id="CHEBI:61557"/>
        <dbReference type="ChEBI" id="CHEBI:140395"/>
        <dbReference type="EC" id="2.7.7.6"/>
    </reaction>
</comment>
<comment type="subunit">
    <text evidence="1">Homodimer. The RNAP catalytic core consists of 2 alpha, 1 beta, 1 beta' and 1 omega subunit. When a sigma factor is associated with the core the holoenzyme is formed, which can initiate transcription.</text>
</comment>
<comment type="domain">
    <text evidence="1">The N-terminal domain is essential for RNAP assembly and basal transcription, whereas the C-terminal domain is involved in interaction with transcriptional regulators and with upstream promoter elements.</text>
</comment>
<comment type="similarity">
    <text evidence="1">Belongs to the RNA polymerase alpha chain family.</text>
</comment>
<sequence length="330" mass="36359">MSDLAIPTISCTESDGKYGRFVVEPLEKGFGTTMGNSLRRILLSYLDGVAITRVRIDGIQHEFSALPKAKEDTLDFLLNLKNIRVESLSGLEGILYLKASGAKVVTAADIEPSNDFEVVNPELYLLTLDSDDAVLNVELEVELGRGYRAPESTENTPIGTIPVDAIFTPIRKVNFTTEPMHVGRETSLERLVLEVWTDGTIEPATAVSRSADILVKQFAALVSHNKVVAEVEASEPVKYAIPEEKYNMPIEQLDLSVRAVNCLRHAGITTVGEVINRGTKELLTLRNFGLKSLTELEDRLKTIGLSLNPEEELFEDAENSKKKNKGMDEA</sequence>
<evidence type="ECO:0000255" key="1">
    <source>
        <dbReference type="HAMAP-Rule" id="MF_00059"/>
    </source>
</evidence>
<dbReference type="EC" id="2.7.7.6" evidence="1"/>
<dbReference type="EMBL" id="CP000027">
    <property type="protein sequence ID" value="AAW40256.1"/>
    <property type="molecule type" value="Genomic_DNA"/>
</dbReference>
<dbReference type="RefSeq" id="WP_010936279.1">
    <property type="nucleotide sequence ID" value="NC_002936.3"/>
</dbReference>
<dbReference type="SMR" id="Q3Z953"/>
<dbReference type="FunCoup" id="Q3Z953">
    <property type="interactions" value="301"/>
</dbReference>
<dbReference type="STRING" id="243164.DET0502"/>
<dbReference type="GeneID" id="3230220"/>
<dbReference type="KEGG" id="det:DET0502"/>
<dbReference type="eggNOG" id="COG0202">
    <property type="taxonomic scope" value="Bacteria"/>
</dbReference>
<dbReference type="HOGENOM" id="CLU_053084_0_1_0"/>
<dbReference type="InParanoid" id="Q3Z953"/>
<dbReference type="Proteomes" id="UP000008289">
    <property type="component" value="Chromosome"/>
</dbReference>
<dbReference type="GO" id="GO:0005737">
    <property type="term" value="C:cytoplasm"/>
    <property type="evidence" value="ECO:0007669"/>
    <property type="project" value="UniProtKB-ARBA"/>
</dbReference>
<dbReference type="GO" id="GO:0000428">
    <property type="term" value="C:DNA-directed RNA polymerase complex"/>
    <property type="evidence" value="ECO:0007669"/>
    <property type="project" value="UniProtKB-KW"/>
</dbReference>
<dbReference type="GO" id="GO:0003677">
    <property type="term" value="F:DNA binding"/>
    <property type="evidence" value="ECO:0007669"/>
    <property type="project" value="UniProtKB-UniRule"/>
</dbReference>
<dbReference type="GO" id="GO:0003899">
    <property type="term" value="F:DNA-directed RNA polymerase activity"/>
    <property type="evidence" value="ECO:0007669"/>
    <property type="project" value="UniProtKB-UniRule"/>
</dbReference>
<dbReference type="GO" id="GO:0046983">
    <property type="term" value="F:protein dimerization activity"/>
    <property type="evidence" value="ECO:0007669"/>
    <property type="project" value="InterPro"/>
</dbReference>
<dbReference type="GO" id="GO:0006351">
    <property type="term" value="P:DNA-templated transcription"/>
    <property type="evidence" value="ECO:0007669"/>
    <property type="project" value="UniProtKB-UniRule"/>
</dbReference>
<dbReference type="CDD" id="cd06928">
    <property type="entry name" value="RNAP_alpha_NTD"/>
    <property type="match status" value="1"/>
</dbReference>
<dbReference type="FunFam" id="1.10.150.20:FF:000166">
    <property type="entry name" value="DNA-directed RNA polymerase subunit alpha"/>
    <property type="match status" value="1"/>
</dbReference>
<dbReference type="FunFam" id="2.170.120.12:FF:000001">
    <property type="entry name" value="DNA-directed RNA polymerase subunit alpha"/>
    <property type="match status" value="1"/>
</dbReference>
<dbReference type="Gene3D" id="1.10.150.20">
    <property type="entry name" value="5' to 3' exonuclease, C-terminal subdomain"/>
    <property type="match status" value="1"/>
</dbReference>
<dbReference type="Gene3D" id="2.170.120.12">
    <property type="entry name" value="DNA-directed RNA polymerase, insert domain"/>
    <property type="match status" value="1"/>
</dbReference>
<dbReference type="Gene3D" id="3.30.1360.10">
    <property type="entry name" value="RNA polymerase, RBP11-like subunit"/>
    <property type="match status" value="1"/>
</dbReference>
<dbReference type="HAMAP" id="MF_00059">
    <property type="entry name" value="RNApol_bact_RpoA"/>
    <property type="match status" value="1"/>
</dbReference>
<dbReference type="InterPro" id="IPR011262">
    <property type="entry name" value="DNA-dir_RNA_pol_insert"/>
</dbReference>
<dbReference type="InterPro" id="IPR011263">
    <property type="entry name" value="DNA-dir_RNA_pol_RpoA/D/Rpb3"/>
</dbReference>
<dbReference type="InterPro" id="IPR011773">
    <property type="entry name" value="DNA-dir_RpoA"/>
</dbReference>
<dbReference type="InterPro" id="IPR036603">
    <property type="entry name" value="RBP11-like"/>
</dbReference>
<dbReference type="InterPro" id="IPR011260">
    <property type="entry name" value="RNAP_asu_C"/>
</dbReference>
<dbReference type="InterPro" id="IPR036643">
    <property type="entry name" value="RNApol_insert_sf"/>
</dbReference>
<dbReference type="NCBIfam" id="NF003513">
    <property type="entry name" value="PRK05182.1-2"/>
    <property type="match status" value="1"/>
</dbReference>
<dbReference type="NCBIfam" id="NF003519">
    <property type="entry name" value="PRK05182.2-5"/>
    <property type="match status" value="1"/>
</dbReference>
<dbReference type="NCBIfam" id="TIGR02027">
    <property type="entry name" value="rpoA"/>
    <property type="match status" value="1"/>
</dbReference>
<dbReference type="Pfam" id="PF01000">
    <property type="entry name" value="RNA_pol_A_bac"/>
    <property type="match status" value="1"/>
</dbReference>
<dbReference type="Pfam" id="PF03118">
    <property type="entry name" value="RNA_pol_A_CTD"/>
    <property type="match status" value="1"/>
</dbReference>
<dbReference type="Pfam" id="PF01193">
    <property type="entry name" value="RNA_pol_L"/>
    <property type="match status" value="1"/>
</dbReference>
<dbReference type="SMART" id="SM00662">
    <property type="entry name" value="RPOLD"/>
    <property type="match status" value="1"/>
</dbReference>
<dbReference type="SUPFAM" id="SSF47789">
    <property type="entry name" value="C-terminal domain of RNA polymerase alpha subunit"/>
    <property type="match status" value="1"/>
</dbReference>
<dbReference type="SUPFAM" id="SSF56553">
    <property type="entry name" value="Insert subdomain of RNA polymerase alpha subunit"/>
    <property type="match status" value="1"/>
</dbReference>
<dbReference type="SUPFAM" id="SSF55257">
    <property type="entry name" value="RBP11-like subunits of RNA polymerase"/>
    <property type="match status" value="1"/>
</dbReference>
<protein>
    <recommendedName>
        <fullName evidence="1">DNA-directed RNA polymerase subunit alpha</fullName>
        <shortName evidence="1">RNAP subunit alpha</shortName>
        <ecNumber evidence="1">2.7.7.6</ecNumber>
    </recommendedName>
    <alternativeName>
        <fullName evidence="1">RNA polymerase subunit alpha</fullName>
    </alternativeName>
    <alternativeName>
        <fullName evidence="1">Transcriptase subunit alpha</fullName>
    </alternativeName>
</protein>
<reference key="1">
    <citation type="journal article" date="2005" name="Science">
        <title>Genome sequence of the PCE-dechlorinating bacterium Dehalococcoides ethenogenes.</title>
        <authorList>
            <person name="Seshadri R."/>
            <person name="Adrian L."/>
            <person name="Fouts D.E."/>
            <person name="Eisen J.A."/>
            <person name="Phillippy A.M."/>
            <person name="Methe B.A."/>
            <person name="Ward N.L."/>
            <person name="Nelson W.C."/>
            <person name="DeBoy R.T."/>
            <person name="Khouri H.M."/>
            <person name="Kolonay J.F."/>
            <person name="Dodson R.J."/>
            <person name="Daugherty S.C."/>
            <person name="Brinkac L.M."/>
            <person name="Sullivan S.A."/>
            <person name="Madupu R."/>
            <person name="Nelson K.E."/>
            <person name="Kang K.H."/>
            <person name="Impraim M."/>
            <person name="Tran K."/>
            <person name="Robinson J.M."/>
            <person name="Forberger H.A."/>
            <person name="Fraser C.M."/>
            <person name="Zinder S.H."/>
            <person name="Heidelberg J.F."/>
        </authorList>
    </citation>
    <scope>NUCLEOTIDE SEQUENCE [LARGE SCALE GENOMIC DNA]</scope>
    <source>
        <strain>ATCC BAA-2266 / KCTC 15142 / 195</strain>
    </source>
</reference>
<accession>Q3Z953</accession>
<name>RPOA_DEHM1</name>
<organism>
    <name type="scientific">Dehalococcoides mccartyi (strain ATCC BAA-2266 / KCTC 15142 / 195)</name>
    <name type="common">Dehalococcoides ethenogenes (strain 195)</name>
    <dbReference type="NCBI Taxonomy" id="243164"/>
    <lineage>
        <taxon>Bacteria</taxon>
        <taxon>Bacillati</taxon>
        <taxon>Chloroflexota</taxon>
        <taxon>Dehalococcoidia</taxon>
        <taxon>Dehalococcoidales</taxon>
        <taxon>Dehalococcoidaceae</taxon>
        <taxon>Dehalococcoides</taxon>
    </lineage>
</organism>
<gene>
    <name evidence="1" type="primary">rpoA</name>
    <name type="ordered locus">DET0502</name>
</gene>